<protein>
    <recommendedName>
        <fullName>Histidine--tRNA ligase</fullName>
        <ecNumber>6.1.1.21</ecNumber>
    </recommendedName>
    <alternativeName>
        <fullName>Histidyl-tRNA synthetase</fullName>
        <shortName>HisRS</shortName>
    </alternativeName>
</protein>
<gene>
    <name type="primary">hisS</name>
    <name type="ordered locus">b2514</name>
    <name type="ordered locus">JW2498</name>
</gene>
<sequence>MAKNIQAIRGMNDYLPGETAIWQRIEGTLKNVLGSYGYSEIRLPIVEQTPLFKRAIGEVTDVVEKEMYTFEDRNGDSLTLRPEGTAGCVRAGIEHGLLYNQEQRLWYIGPMFRHERPQKGRYRQFHQLGCEVFGLQGPDIDAELIMLTARWWRALGISEHVTLELNSIGSLEARANYRDALVAFLEQHKEKLDEDCKRRMYTNPLRVLDSKNPEVQALLNDAPALGDYLDEESREHFAGLCKLLESAGIAYTVNQRLVRGLDYYNRTVFEWVTNSLGSQGTVCAGGRYDGLVEQLGGRATPAVGFAMGLERLVLLVQAVNPEFKADPVVDIYLVASGADTQSAAMALAERLRDELPGVKLMTNHGGGNFKKQFARADKWGARVAVVLGESEVANGTAVVKDLRSGEQTAVAQDSVAAHLRTLLG</sequence>
<evidence type="ECO:0000305" key="1"/>
<evidence type="ECO:0007829" key="2">
    <source>
        <dbReference type="PDB" id="1HTT"/>
    </source>
</evidence>
<evidence type="ECO:0007829" key="3">
    <source>
        <dbReference type="PDB" id="1KMM"/>
    </source>
</evidence>
<evidence type="ECO:0007829" key="4">
    <source>
        <dbReference type="PDB" id="1KMN"/>
    </source>
</evidence>
<evidence type="ECO:0007829" key="5">
    <source>
        <dbReference type="PDB" id="2EL9"/>
    </source>
</evidence>
<proteinExistence type="evidence at protein level"/>
<accession>P60906</accession>
<accession>P04804</accession>
<comment type="catalytic activity">
    <reaction>
        <text>tRNA(His) + L-histidine + ATP = L-histidyl-tRNA(His) + AMP + diphosphate + H(+)</text>
        <dbReference type="Rhea" id="RHEA:17313"/>
        <dbReference type="Rhea" id="RHEA-COMP:9665"/>
        <dbReference type="Rhea" id="RHEA-COMP:9689"/>
        <dbReference type="ChEBI" id="CHEBI:15378"/>
        <dbReference type="ChEBI" id="CHEBI:30616"/>
        <dbReference type="ChEBI" id="CHEBI:33019"/>
        <dbReference type="ChEBI" id="CHEBI:57595"/>
        <dbReference type="ChEBI" id="CHEBI:78442"/>
        <dbReference type="ChEBI" id="CHEBI:78527"/>
        <dbReference type="ChEBI" id="CHEBI:456215"/>
        <dbReference type="EC" id="6.1.1.21"/>
    </reaction>
</comment>
<comment type="subunit">
    <text>Homodimer.</text>
</comment>
<comment type="subcellular location">
    <subcellularLocation>
        <location>Cytoplasm</location>
    </subcellularLocation>
</comment>
<comment type="similarity">
    <text evidence="1">Belongs to the class-II aminoacyl-tRNA synthetase family.</text>
</comment>
<reference key="1">
    <citation type="journal article" date="1985" name="J. Biol. Chem.">
        <title>Primary structure of histidine-tRNA synthetase and characterization of hisS transcripts.</title>
        <authorList>
            <person name="Freedman R."/>
            <person name="Gibson B."/>
            <person name="Donovan D."/>
            <person name="Biemann K."/>
            <person name="Eisenbeis S.J."/>
            <person name="Parker J."/>
            <person name="Schimmel P."/>
        </authorList>
    </citation>
    <scope>NUCLEOTIDE SEQUENCE [GENOMIC DNA]</scope>
    <scope>PARTIAL PROTEIN SEQUENCE</scope>
</reference>
<reference key="2">
    <citation type="journal article" date="1997" name="DNA Res.">
        <title>Construction of a contiguous 874-kb sequence of the Escherichia coli-K12 genome corresponding to 50.0-68.8 min on the linkage map and analysis of its sequence features.</title>
        <authorList>
            <person name="Yamamoto Y."/>
            <person name="Aiba H."/>
            <person name="Baba T."/>
            <person name="Hayashi K."/>
            <person name="Inada T."/>
            <person name="Isono K."/>
            <person name="Itoh T."/>
            <person name="Kimura S."/>
            <person name="Kitagawa M."/>
            <person name="Makino K."/>
            <person name="Miki T."/>
            <person name="Mitsuhashi N."/>
            <person name="Mizobuchi K."/>
            <person name="Mori H."/>
            <person name="Nakade S."/>
            <person name="Nakamura Y."/>
            <person name="Nashimoto H."/>
            <person name="Oshima T."/>
            <person name="Oyama S."/>
            <person name="Saito N."/>
            <person name="Sampei G."/>
            <person name="Satoh Y."/>
            <person name="Sivasundaram S."/>
            <person name="Tagami H."/>
            <person name="Takahashi H."/>
            <person name="Takeda J."/>
            <person name="Takemoto K."/>
            <person name="Uehara K."/>
            <person name="Wada C."/>
            <person name="Yamagata S."/>
            <person name="Horiuchi T."/>
        </authorList>
    </citation>
    <scope>NUCLEOTIDE SEQUENCE [LARGE SCALE GENOMIC DNA]</scope>
    <source>
        <strain>K12 / W3110 / ATCC 27325 / DSM 5911</strain>
    </source>
</reference>
<reference key="3">
    <citation type="journal article" date="1997" name="Science">
        <title>The complete genome sequence of Escherichia coli K-12.</title>
        <authorList>
            <person name="Blattner F.R."/>
            <person name="Plunkett G. III"/>
            <person name="Bloch C.A."/>
            <person name="Perna N.T."/>
            <person name="Burland V."/>
            <person name="Riley M."/>
            <person name="Collado-Vides J."/>
            <person name="Glasner J.D."/>
            <person name="Rode C.K."/>
            <person name="Mayhew G.F."/>
            <person name="Gregor J."/>
            <person name="Davis N.W."/>
            <person name="Kirkpatrick H.A."/>
            <person name="Goeden M.A."/>
            <person name="Rose D.J."/>
            <person name="Mau B."/>
            <person name="Shao Y."/>
        </authorList>
    </citation>
    <scope>NUCLEOTIDE SEQUENCE [LARGE SCALE GENOMIC DNA]</scope>
    <source>
        <strain>K12 / MG1655 / ATCC 47076</strain>
    </source>
</reference>
<reference key="4">
    <citation type="journal article" date="2006" name="Mol. Syst. Biol.">
        <title>Highly accurate genome sequences of Escherichia coli K-12 strains MG1655 and W3110.</title>
        <authorList>
            <person name="Hayashi K."/>
            <person name="Morooka N."/>
            <person name="Yamamoto Y."/>
            <person name="Fujita K."/>
            <person name="Isono K."/>
            <person name="Choi S."/>
            <person name="Ohtsubo E."/>
            <person name="Baba T."/>
            <person name="Wanner B.L."/>
            <person name="Mori H."/>
            <person name="Horiuchi T."/>
        </authorList>
    </citation>
    <scope>NUCLEOTIDE SEQUENCE [LARGE SCALE GENOMIC DNA]</scope>
    <source>
        <strain>K12 / W3110 / ATCC 27325 / DSM 5911</strain>
    </source>
</reference>
<reference key="5">
    <citation type="journal article" date="1982" name="Gene">
        <title>The nucleotide sequence of the promoter region of hisS, the structural gene for histidyl-tRNA synthetase.</title>
        <authorList>
            <person name="Eisenbeis S.J."/>
            <person name="Parker J."/>
        </authorList>
    </citation>
    <scope>NUCLEOTIDE SEQUENCE [GENOMIC DNA] OF 1-16</scope>
</reference>
<reference key="6">
    <citation type="journal article" date="1997" name="Electrophoresis">
        <title>Escherichia coli proteome analysis using the gene-protein database.</title>
        <authorList>
            <person name="VanBogelen R.A."/>
            <person name="Abshire K.Z."/>
            <person name="Moldover B."/>
            <person name="Olson E.R."/>
            <person name="Neidhardt F.C."/>
        </authorList>
    </citation>
    <scope>IDENTIFICATION BY 2D-GEL</scope>
</reference>
<reference key="7">
    <citation type="journal article" date="1995" name="EMBO J.">
        <title>Crystal structure of histidyl-tRNA synthetase from Escherichia coli complexed with histidyl-adenylate.</title>
        <authorList>
            <person name="Arnez J.G."/>
            <person name="Harris D.C."/>
            <person name="Mitschler A."/>
            <person name="Rees B."/>
            <person name="Francklyn C.S."/>
            <person name="Moras D."/>
        </authorList>
    </citation>
    <scope>X-RAY CRYSTALLOGRAPHY (2.6 ANGSTROMS)</scope>
</reference>
<reference key="8">
    <citation type="journal article" date="1997" name="Proc. Natl. Acad. Sci. U.S.A.">
        <title>The first step of aminoacylation at the atomic level in histidyl-tRNA synthetase.</title>
        <authorList>
            <person name="Arnez J.G."/>
            <person name="Augustine J.G."/>
            <person name="Moras D."/>
            <person name="Francklyn C.S."/>
        </authorList>
    </citation>
    <scope>X-RAY CRYSTALLOGRAPHY (2.6 ANGSTROMS)</scope>
</reference>
<dbReference type="EC" id="6.1.1.21"/>
<dbReference type="EMBL" id="M11843">
    <property type="protein sequence ID" value="AAA03226.1"/>
    <property type="molecule type" value="Genomic_DNA"/>
</dbReference>
<dbReference type="EMBL" id="U00096">
    <property type="protein sequence ID" value="AAC75567.1"/>
    <property type="molecule type" value="Genomic_DNA"/>
</dbReference>
<dbReference type="EMBL" id="AP009048">
    <property type="protein sequence ID" value="BAA16401.1"/>
    <property type="molecule type" value="Genomic_DNA"/>
</dbReference>
<dbReference type="PIR" id="A23890">
    <property type="entry name" value="SYECH"/>
</dbReference>
<dbReference type="RefSeq" id="NP_417009.1">
    <property type="nucleotide sequence ID" value="NC_000913.3"/>
</dbReference>
<dbReference type="RefSeq" id="WP_001107167.1">
    <property type="nucleotide sequence ID" value="NZ_STEB01000011.1"/>
</dbReference>
<dbReference type="PDB" id="1HTT">
    <property type="method" value="X-ray"/>
    <property type="resolution" value="2.60 A"/>
    <property type="chains" value="A/B/C/D=2-424"/>
</dbReference>
<dbReference type="PDB" id="1KMM">
    <property type="method" value="X-ray"/>
    <property type="resolution" value="2.60 A"/>
    <property type="chains" value="A/B/C/D=1-424"/>
</dbReference>
<dbReference type="PDB" id="1KMN">
    <property type="method" value="X-ray"/>
    <property type="resolution" value="2.80 A"/>
    <property type="chains" value="A/B/C/D=1-424"/>
</dbReference>
<dbReference type="PDB" id="2EL9">
    <property type="method" value="X-ray"/>
    <property type="resolution" value="2.70 A"/>
    <property type="chains" value="A/B/C/D=1-424"/>
</dbReference>
<dbReference type="PDBsum" id="1HTT"/>
<dbReference type="PDBsum" id="1KMM"/>
<dbReference type="PDBsum" id="1KMN"/>
<dbReference type="PDBsum" id="2EL9"/>
<dbReference type="SMR" id="P60906"/>
<dbReference type="BioGRID" id="4260589">
    <property type="interactions" value="69"/>
</dbReference>
<dbReference type="DIP" id="DIP-35894N"/>
<dbReference type="FunCoup" id="P60906">
    <property type="interactions" value="765"/>
</dbReference>
<dbReference type="IntAct" id="P60906">
    <property type="interactions" value="2"/>
</dbReference>
<dbReference type="STRING" id="511145.b2514"/>
<dbReference type="DrugBank" id="DB03811">
    <property type="generic name" value="Histidinol"/>
</dbReference>
<dbReference type="DrugBank" id="DB04201">
    <property type="generic name" value="Histidyl-Adenosine Monophosphate"/>
</dbReference>
<dbReference type="jPOST" id="P60906"/>
<dbReference type="PaxDb" id="511145-b2514"/>
<dbReference type="EnsemblBacteria" id="AAC75567">
    <property type="protein sequence ID" value="AAC75567"/>
    <property type="gene ID" value="b2514"/>
</dbReference>
<dbReference type="GeneID" id="75206207"/>
<dbReference type="GeneID" id="946989"/>
<dbReference type="KEGG" id="ecj:JW2498"/>
<dbReference type="KEGG" id="eco:b2514"/>
<dbReference type="KEGG" id="ecoc:C3026_13940"/>
<dbReference type="PATRIC" id="fig|1411691.4.peg.4222"/>
<dbReference type="EchoBASE" id="EB0448"/>
<dbReference type="eggNOG" id="COG0124">
    <property type="taxonomic scope" value="Bacteria"/>
</dbReference>
<dbReference type="HOGENOM" id="CLU_025113_1_1_6"/>
<dbReference type="InParanoid" id="P60906"/>
<dbReference type="OMA" id="CGGGNFK"/>
<dbReference type="OrthoDB" id="9800814at2"/>
<dbReference type="PhylomeDB" id="P60906"/>
<dbReference type="BioCyc" id="EcoCyc:HISS-MONOMER"/>
<dbReference type="BioCyc" id="MetaCyc:HISS-MONOMER"/>
<dbReference type="BRENDA" id="6.1.1.21">
    <property type="organism ID" value="2026"/>
</dbReference>
<dbReference type="SABIO-RK" id="P60906"/>
<dbReference type="EvolutionaryTrace" id="P60906"/>
<dbReference type="PRO" id="PR:P60906"/>
<dbReference type="Proteomes" id="UP000000625">
    <property type="component" value="Chromosome"/>
</dbReference>
<dbReference type="GO" id="GO:0005829">
    <property type="term" value="C:cytosol"/>
    <property type="evidence" value="ECO:0000314"/>
    <property type="project" value="EcoCyc"/>
</dbReference>
<dbReference type="GO" id="GO:0005524">
    <property type="term" value="F:ATP binding"/>
    <property type="evidence" value="ECO:0007669"/>
    <property type="project" value="UniProtKB-UniRule"/>
</dbReference>
<dbReference type="GO" id="GO:0004821">
    <property type="term" value="F:histidine-tRNA ligase activity"/>
    <property type="evidence" value="ECO:0000314"/>
    <property type="project" value="EcoCyc"/>
</dbReference>
<dbReference type="GO" id="GO:0042803">
    <property type="term" value="F:protein homodimerization activity"/>
    <property type="evidence" value="ECO:0000314"/>
    <property type="project" value="EcoCyc"/>
</dbReference>
<dbReference type="GO" id="GO:0006427">
    <property type="term" value="P:histidyl-tRNA aminoacylation"/>
    <property type="evidence" value="ECO:0000314"/>
    <property type="project" value="EcoCyc"/>
</dbReference>
<dbReference type="CDD" id="cd00773">
    <property type="entry name" value="HisRS-like_core"/>
    <property type="match status" value="1"/>
</dbReference>
<dbReference type="CDD" id="cd00859">
    <property type="entry name" value="HisRS_anticodon"/>
    <property type="match status" value="1"/>
</dbReference>
<dbReference type="FunFam" id="3.30.930.10:FF:000005">
    <property type="entry name" value="Histidine--tRNA ligase"/>
    <property type="match status" value="1"/>
</dbReference>
<dbReference type="FunFam" id="3.40.50.800:FF:000007">
    <property type="entry name" value="Histidine--tRNA ligase"/>
    <property type="match status" value="1"/>
</dbReference>
<dbReference type="Gene3D" id="3.40.50.800">
    <property type="entry name" value="Anticodon-binding domain"/>
    <property type="match status" value="1"/>
</dbReference>
<dbReference type="Gene3D" id="3.30.930.10">
    <property type="entry name" value="Bira Bifunctional Protein, Domain 2"/>
    <property type="match status" value="1"/>
</dbReference>
<dbReference type="HAMAP" id="MF_00127">
    <property type="entry name" value="His_tRNA_synth"/>
    <property type="match status" value="1"/>
</dbReference>
<dbReference type="InterPro" id="IPR006195">
    <property type="entry name" value="aa-tRNA-synth_II"/>
</dbReference>
<dbReference type="InterPro" id="IPR045864">
    <property type="entry name" value="aa-tRNA-synth_II/BPL/LPL"/>
</dbReference>
<dbReference type="InterPro" id="IPR004154">
    <property type="entry name" value="Anticodon-bd"/>
</dbReference>
<dbReference type="InterPro" id="IPR036621">
    <property type="entry name" value="Anticodon-bd_dom_sf"/>
</dbReference>
<dbReference type="InterPro" id="IPR015807">
    <property type="entry name" value="His-tRNA-ligase"/>
</dbReference>
<dbReference type="InterPro" id="IPR041715">
    <property type="entry name" value="HisRS-like_core"/>
</dbReference>
<dbReference type="InterPro" id="IPR004516">
    <property type="entry name" value="HisRS/HisZ"/>
</dbReference>
<dbReference type="InterPro" id="IPR033656">
    <property type="entry name" value="HisRS_anticodon"/>
</dbReference>
<dbReference type="NCBIfam" id="TIGR00442">
    <property type="entry name" value="hisS"/>
    <property type="match status" value="1"/>
</dbReference>
<dbReference type="PANTHER" id="PTHR43707:SF1">
    <property type="entry name" value="HISTIDINE--TRNA LIGASE, MITOCHONDRIAL-RELATED"/>
    <property type="match status" value="1"/>
</dbReference>
<dbReference type="PANTHER" id="PTHR43707">
    <property type="entry name" value="HISTIDYL-TRNA SYNTHETASE"/>
    <property type="match status" value="1"/>
</dbReference>
<dbReference type="Pfam" id="PF03129">
    <property type="entry name" value="HGTP_anticodon"/>
    <property type="match status" value="1"/>
</dbReference>
<dbReference type="Pfam" id="PF13393">
    <property type="entry name" value="tRNA-synt_His"/>
    <property type="match status" value="1"/>
</dbReference>
<dbReference type="PIRSF" id="PIRSF001549">
    <property type="entry name" value="His-tRNA_synth"/>
    <property type="match status" value="1"/>
</dbReference>
<dbReference type="SUPFAM" id="SSF52954">
    <property type="entry name" value="Class II aaRS ABD-related"/>
    <property type="match status" value="1"/>
</dbReference>
<dbReference type="SUPFAM" id="SSF55681">
    <property type="entry name" value="Class II aaRS and biotin synthetases"/>
    <property type="match status" value="1"/>
</dbReference>
<dbReference type="PROSITE" id="PS50862">
    <property type="entry name" value="AA_TRNA_LIGASE_II"/>
    <property type="match status" value="1"/>
</dbReference>
<feature type="initiator methionine" description="Removed">
    <location>
        <position position="1"/>
    </location>
</feature>
<feature type="chain" id="PRO_0000136161" description="Histidine--tRNA ligase">
    <location>
        <begin position="2"/>
        <end position="424"/>
    </location>
</feature>
<feature type="helix" evidence="2">
    <location>
        <begin position="16"/>
        <end position="34"/>
    </location>
</feature>
<feature type="turn" evidence="2">
    <location>
        <begin position="35"/>
        <end position="37"/>
    </location>
</feature>
<feature type="strand" evidence="2">
    <location>
        <begin position="45"/>
        <end position="48"/>
    </location>
</feature>
<feature type="helix" evidence="2">
    <location>
        <begin position="49"/>
        <end position="56"/>
    </location>
</feature>
<feature type="strand" evidence="2">
    <location>
        <begin position="58"/>
        <end position="60"/>
    </location>
</feature>
<feature type="helix" evidence="2">
    <location>
        <begin position="61"/>
        <end position="65"/>
    </location>
</feature>
<feature type="strand" evidence="2">
    <location>
        <begin position="68"/>
        <end position="71"/>
    </location>
</feature>
<feature type="strand" evidence="2">
    <location>
        <begin position="77"/>
        <end position="80"/>
    </location>
</feature>
<feature type="helix" evidence="2">
    <location>
        <begin position="85"/>
        <end position="95"/>
    </location>
</feature>
<feature type="strand" evidence="2">
    <location>
        <begin position="103"/>
        <end position="112"/>
    </location>
</feature>
<feature type="strand" evidence="2">
    <location>
        <begin position="123"/>
        <end position="134"/>
    </location>
</feature>
<feature type="helix" evidence="2">
    <location>
        <begin position="138"/>
        <end position="154"/>
    </location>
</feature>
<feature type="helix" evidence="2">
    <location>
        <begin position="158"/>
        <end position="160"/>
    </location>
</feature>
<feature type="strand" evidence="2">
    <location>
        <begin position="162"/>
        <end position="167"/>
    </location>
</feature>
<feature type="helix" evidence="2">
    <location>
        <begin position="171"/>
        <end position="176"/>
    </location>
</feature>
<feature type="helix" evidence="4">
    <location>
        <begin position="178"/>
        <end position="182"/>
    </location>
</feature>
<feature type="helix" evidence="3">
    <location>
        <begin position="225"/>
        <end position="227"/>
    </location>
</feature>
<feature type="helix" evidence="2">
    <location>
        <begin position="231"/>
        <end position="245"/>
    </location>
</feature>
<feature type="turn" evidence="2">
    <location>
        <begin position="246"/>
        <end position="248"/>
    </location>
</feature>
<feature type="strand" evidence="3">
    <location>
        <begin position="251"/>
        <end position="253"/>
    </location>
</feature>
<feature type="strand" evidence="3">
    <location>
        <begin position="260"/>
        <end position="262"/>
    </location>
</feature>
<feature type="strand" evidence="2">
    <location>
        <begin position="266"/>
        <end position="272"/>
    </location>
</feature>
<feature type="turn" evidence="5">
    <location>
        <begin position="277"/>
        <end position="279"/>
    </location>
</feature>
<feature type="strand" evidence="2">
    <location>
        <begin position="281"/>
        <end position="287"/>
    </location>
</feature>
<feature type="helix" evidence="2">
    <location>
        <begin position="291"/>
        <end position="294"/>
    </location>
</feature>
<feature type="strand" evidence="2">
    <location>
        <begin position="302"/>
        <end position="308"/>
    </location>
</feature>
<feature type="helix" evidence="2">
    <location>
        <begin position="309"/>
        <end position="319"/>
    </location>
</feature>
<feature type="strand" evidence="4">
    <location>
        <begin position="320"/>
        <end position="322"/>
    </location>
</feature>
<feature type="strand" evidence="2">
    <location>
        <begin position="330"/>
        <end position="335"/>
    </location>
</feature>
<feature type="helix" evidence="2">
    <location>
        <begin position="340"/>
        <end position="354"/>
    </location>
</feature>
<feature type="strand" evidence="2">
    <location>
        <begin position="360"/>
        <end position="362"/>
    </location>
</feature>
<feature type="helix" evidence="2">
    <location>
        <begin position="369"/>
        <end position="379"/>
    </location>
</feature>
<feature type="strand" evidence="2">
    <location>
        <begin position="382"/>
        <end position="387"/>
    </location>
</feature>
<feature type="helix" evidence="2">
    <location>
        <begin position="389"/>
        <end position="394"/>
    </location>
</feature>
<feature type="strand" evidence="2">
    <location>
        <begin position="396"/>
        <end position="401"/>
    </location>
</feature>
<feature type="turn" evidence="2">
    <location>
        <begin position="402"/>
        <end position="404"/>
    </location>
</feature>
<feature type="strand" evidence="2">
    <location>
        <begin position="407"/>
        <end position="411"/>
    </location>
</feature>
<feature type="helix" evidence="2">
    <location>
        <begin position="412"/>
        <end position="423"/>
    </location>
</feature>
<name>SYH_ECOLI</name>
<organism>
    <name type="scientific">Escherichia coli (strain K12)</name>
    <dbReference type="NCBI Taxonomy" id="83333"/>
    <lineage>
        <taxon>Bacteria</taxon>
        <taxon>Pseudomonadati</taxon>
        <taxon>Pseudomonadota</taxon>
        <taxon>Gammaproteobacteria</taxon>
        <taxon>Enterobacterales</taxon>
        <taxon>Enterobacteriaceae</taxon>
        <taxon>Escherichia</taxon>
    </lineage>
</organism>
<keyword id="KW-0002">3D-structure</keyword>
<keyword id="KW-0030">Aminoacyl-tRNA synthetase</keyword>
<keyword id="KW-0067">ATP-binding</keyword>
<keyword id="KW-0963">Cytoplasm</keyword>
<keyword id="KW-0903">Direct protein sequencing</keyword>
<keyword id="KW-0436">Ligase</keyword>
<keyword id="KW-0547">Nucleotide-binding</keyword>
<keyword id="KW-0648">Protein biosynthesis</keyword>
<keyword id="KW-1185">Reference proteome</keyword>